<organism>
    <name type="scientific">Bacillus pumilus (strain SAFR-032)</name>
    <dbReference type="NCBI Taxonomy" id="315750"/>
    <lineage>
        <taxon>Bacteria</taxon>
        <taxon>Bacillati</taxon>
        <taxon>Bacillota</taxon>
        <taxon>Bacilli</taxon>
        <taxon>Bacillales</taxon>
        <taxon>Bacillaceae</taxon>
        <taxon>Bacillus</taxon>
    </lineage>
</organism>
<name>MSCL_BACP2</name>
<gene>
    <name evidence="1" type="primary">mscL</name>
    <name type="ordered locus">BPUM_3285</name>
</gene>
<sequence>MLKEFREFAVKGNVIDLAVGVIIGGAFGKIVTSLVNDLIMPLVGIIIGGHDFSGLSIKIGSAQILYGSFIQTVIDFLIISFSIFIFIRYLNKLKRKKVEEEEVVETPDQTEVLLTEIRDLLKHQSQSKDVQ</sequence>
<reference key="1">
    <citation type="journal article" date="2007" name="PLoS ONE">
        <title>Paradoxical DNA repair and peroxide resistance gene conservation in Bacillus pumilus SAFR-032.</title>
        <authorList>
            <person name="Gioia J."/>
            <person name="Yerrapragada S."/>
            <person name="Qin X."/>
            <person name="Jiang H."/>
            <person name="Igboeli O.C."/>
            <person name="Muzny D."/>
            <person name="Dugan-Rocha S."/>
            <person name="Ding Y."/>
            <person name="Hawes A."/>
            <person name="Liu W."/>
            <person name="Perez L."/>
            <person name="Kovar C."/>
            <person name="Dinh H."/>
            <person name="Lee S."/>
            <person name="Nazareth L."/>
            <person name="Blyth P."/>
            <person name="Holder M."/>
            <person name="Buhay C."/>
            <person name="Tirumalai M.R."/>
            <person name="Liu Y."/>
            <person name="Dasgupta I."/>
            <person name="Bokhetache L."/>
            <person name="Fujita M."/>
            <person name="Karouia F."/>
            <person name="Eswara Moorthy P."/>
            <person name="Siefert J."/>
            <person name="Uzman A."/>
            <person name="Buzumbo P."/>
            <person name="Verma A."/>
            <person name="Zwiya H."/>
            <person name="McWilliams B.D."/>
            <person name="Olowu A."/>
            <person name="Clinkenbeard K.D."/>
            <person name="Newcombe D."/>
            <person name="Golebiewski L."/>
            <person name="Petrosino J.F."/>
            <person name="Nicholson W.L."/>
            <person name="Fox G.E."/>
            <person name="Venkateswaran K."/>
            <person name="Highlander S.K."/>
            <person name="Weinstock G.M."/>
        </authorList>
    </citation>
    <scope>NUCLEOTIDE SEQUENCE [LARGE SCALE GENOMIC DNA]</scope>
    <source>
        <strain>SAFR-032</strain>
    </source>
</reference>
<feature type="chain" id="PRO_1000057753" description="Large-conductance mechanosensitive channel">
    <location>
        <begin position="1"/>
        <end position="131"/>
    </location>
</feature>
<feature type="transmembrane region" description="Helical" evidence="1">
    <location>
        <begin position="14"/>
        <end position="34"/>
    </location>
</feature>
<feature type="transmembrane region" description="Helical" evidence="1">
    <location>
        <begin position="67"/>
        <end position="87"/>
    </location>
</feature>
<proteinExistence type="inferred from homology"/>
<comment type="function">
    <text evidence="1">Channel that opens in response to stretch forces in the membrane lipid bilayer. May participate in the regulation of osmotic pressure changes within the cell.</text>
</comment>
<comment type="subunit">
    <text evidence="1">Homopentamer.</text>
</comment>
<comment type="subcellular location">
    <subcellularLocation>
        <location evidence="1">Cell membrane</location>
        <topology evidence="1">Multi-pass membrane protein</topology>
    </subcellularLocation>
</comment>
<comment type="similarity">
    <text evidence="1">Belongs to the MscL family.</text>
</comment>
<accession>A8FI71</accession>
<dbReference type="EMBL" id="CP000813">
    <property type="protein sequence ID" value="ABV63938.1"/>
    <property type="molecule type" value="Genomic_DNA"/>
</dbReference>
<dbReference type="RefSeq" id="WP_003215139.1">
    <property type="nucleotide sequence ID" value="NZ_VEIS01000002.1"/>
</dbReference>
<dbReference type="STRING" id="315750.BPUM_3285"/>
<dbReference type="GeneID" id="5622574"/>
<dbReference type="KEGG" id="bpu:BPUM_3285"/>
<dbReference type="eggNOG" id="COG1970">
    <property type="taxonomic scope" value="Bacteria"/>
</dbReference>
<dbReference type="HOGENOM" id="CLU_095787_0_0_9"/>
<dbReference type="OrthoDB" id="9810350at2"/>
<dbReference type="Proteomes" id="UP000001355">
    <property type="component" value="Chromosome"/>
</dbReference>
<dbReference type="GO" id="GO:0005886">
    <property type="term" value="C:plasma membrane"/>
    <property type="evidence" value="ECO:0007669"/>
    <property type="project" value="UniProtKB-SubCell"/>
</dbReference>
<dbReference type="GO" id="GO:0008381">
    <property type="term" value="F:mechanosensitive monoatomic ion channel activity"/>
    <property type="evidence" value="ECO:0007669"/>
    <property type="project" value="UniProtKB-UniRule"/>
</dbReference>
<dbReference type="FunFam" id="1.10.1200.120:FF:000001">
    <property type="entry name" value="Large-conductance mechanosensitive channel"/>
    <property type="match status" value="1"/>
</dbReference>
<dbReference type="Gene3D" id="1.10.1200.120">
    <property type="entry name" value="Large-conductance mechanosensitive channel, MscL, domain 1"/>
    <property type="match status" value="1"/>
</dbReference>
<dbReference type="HAMAP" id="MF_00115">
    <property type="entry name" value="MscL"/>
    <property type="match status" value="1"/>
</dbReference>
<dbReference type="InterPro" id="IPR019823">
    <property type="entry name" value="Mechanosensitive_channel_CS"/>
</dbReference>
<dbReference type="InterPro" id="IPR001185">
    <property type="entry name" value="MS_channel"/>
</dbReference>
<dbReference type="InterPro" id="IPR037673">
    <property type="entry name" value="MSC/AndL"/>
</dbReference>
<dbReference type="InterPro" id="IPR036019">
    <property type="entry name" value="MscL_channel"/>
</dbReference>
<dbReference type="NCBIfam" id="TIGR00220">
    <property type="entry name" value="mscL"/>
    <property type="match status" value="1"/>
</dbReference>
<dbReference type="NCBIfam" id="NF001843">
    <property type="entry name" value="PRK00567.1-4"/>
    <property type="match status" value="1"/>
</dbReference>
<dbReference type="NCBIfam" id="NF010560">
    <property type="entry name" value="PRK13955.1"/>
    <property type="match status" value="1"/>
</dbReference>
<dbReference type="PANTHER" id="PTHR30266:SF2">
    <property type="entry name" value="LARGE-CONDUCTANCE MECHANOSENSITIVE CHANNEL"/>
    <property type="match status" value="1"/>
</dbReference>
<dbReference type="PANTHER" id="PTHR30266">
    <property type="entry name" value="MECHANOSENSITIVE CHANNEL MSCL"/>
    <property type="match status" value="1"/>
</dbReference>
<dbReference type="Pfam" id="PF01741">
    <property type="entry name" value="MscL"/>
    <property type="match status" value="1"/>
</dbReference>
<dbReference type="PRINTS" id="PR01264">
    <property type="entry name" value="MECHCHANNEL"/>
</dbReference>
<dbReference type="SUPFAM" id="SSF81330">
    <property type="entry name" value="Gated mechanosensitive channel"/>
    <property type="match status" value="1"/>
</dbReference>
<dbReference type="PROSITE" id="PS01327">
    <property type="entry name" value="MSCL"/>
    <property type="match status" value="1"/>
</dbReference>
<keyword id="KW-1003">Cell membrane</keyword>
<keyword id="KW-0407">Ion channel</keyword>
<keyword id="KW-0406">Ion transport</keyword>
<keyword id="KW-0472">Membrane</keyword>
<keyword id="KW-0812">Transmembrane</keyword>
<keyword id="KW-1133">Transmembrane helix</keyword>
<keyword id="KW-0813">Transport</keyword>
<protein>
    <recommendedName>
        <fullName evidence="1">Large-conductance mechanosensitive channel</fullName>
    </recommendedName>
</protein>
<evidence type="ECO:0000255" key="1">
    <source>
        <dbReference type="HAMAP-Rule" id="MF_00115"/>
    </source>
</evidence>